<protein>
    <recommendedName>
        <fullName evidence="1">Probable cell division protein WhiA</fullName>
    </recommendedName>
</protein>
<sequence length="311" mass="35724">MASYASEVKKELTSLEVHPEHAKAELAAFLRMNGVLNLHDHQFSLDITTENPAIARRIFKLIKVAYGIEPLLIVSRKMKLKKNNQYLVRLNQQVQEILENLQIWDTEKGLVTRIPKRIMSSREGAMSYLRGAFLAGGSVNNPETSRYHLEIYSTYEDHNEDLAKLMNEYFYLNAKMTKRRRGYIVYLKEAEKIGDFLHIVGALNAMLNFEDLRIMRDMRNSVNRLVNCDTANMKKTASASAKQVEDIQLIQKEKGLDDLSEKLQILANFRLAHPELTLKEVADQIPDGPISKSGVNHRFKKLHEIAESLRE</sequence>
<dbReference type="EMBL" id="CP000033">
    <property type="protein sequence ID" value="AAV42568.1"/>
    <property type="molecule type" value="Genomic_DNA"/>
</dbReference>
<dbReference type="RefSeq" id="WP_003546596.1">
    <property type="nucleotide sequence ID" value="NC_006814.3"/>
</dbReference>
<dbReference type="RefSeq" id="YP_193599.1">
    <property type="nucleotide sequence ID" value="NC_006814.3"/>
</dbReference>
<dbReference type="SMR" id="Q5FL56"/>
<dbReference type="STRING" id="272621.LBA0693"/>
<dbReference type="GeneID" id="93290180"/>
<dbReference type="KEGG" id="lac:LBA0693"/>
<dbReference type="PATRIC" id="fig|272621.13.peg.662"/>
<dbReference type="eggNOG" id="COG1481">
    <property type="taxonomic scope" value="Bacteria"/>
</dbReference>
<dbReference type="HOGENOM" id="CLU_053282_1_0_9"/>
<dbReference type="OrthoDB" id="401278at2"/>
<dbReference type="BioCyc" id="LACI272621:G1G49-714-MONOMER"/>
<dbReference type="Proteomes" id="UP000006381">
    <property type="component" value="Chromosome"/>
</dbReference>
<dbReference type="GO" id="GO:0003677">
    <property type="term" value="F:DNA binding"/>
    <property type="evidence" value="ECO:0007669"/>
    <property type="project" value="UniProtKB-UniRule"/>
</dbReference>
<dbReference type="GO" id="GO:0051301">
    <property type="term" value="P:cell division"/>
    <property type="evidence" value="ECO:0007669"/>
    <property type="project" value="UniProtKB-UniRule"/>
</dbReference>
<dbReference type="GO" id="GO:0043937">
    <property type="term" value="P:regulation of sporulation"/>
    <property type="evidence" value="ECO:0007669"/>
    <property type="project" value="InterPro"/>
</dbReference>
<dbReference type="Gene3D" id="3.10.28.10">
    <property type="entry name" value="Homing endonucleases"/>
    <property type="match status" value="1"/>
</dbReference>
<dbReference type="HAMAP" id="MF_01420">
    <property type="entry name" value="HTH_type_WhiA"/>
    <property type="match status" value="1"/>
</dbReference>
<dbReference type="InterPro" id="IPR027434">
    <property type="entry name" value="Homing_endonucl"/>
</dbReference>
<dbReference type="InterPro" id="IPR018478">
    <property type="entry name" value="Sporu_reg_WhiA_N_dom"/>
</dbReference>
<dbReference type="InterPro" id="IPR003802">
    <property type="entry name" value="Sporulation_regulator_WhiA"/>
</dbReference>
<dbReference type="InterPro" id="IPR023054">
    <property type="entry name" value="Sporulation_regulator_WhiA_C"/>
</dbReference>
<dbReference type="InterPro" id="IPR039518">
    <property type="entry name" value="WhiA_LAGLIDADG_dom"/>
</dbReference>
<dbReference type="NCBIfam" id="TIGR00647">
    <property type="entry name" value="DNA_bind_WhiA"/>
    <property type="match status" value="1"/>
</dbReference>
<dbReference type="PANTHER" id="PTHR37307">
    <property type="entry name" value="CELL DIVISION PROTEIN WHIA-RELATED"/>
    <property type="match status" value="1"/>
</dbReference>
<dbReference type="PANTHER" id="PTHR37307:SF1">
    <property type="entry name" value="CELL DIVISION PROTEIN WHIA-RELATED"/>
    <property type="match status" value="1"/>
</dbReference>
<dbReference type="Pfam" id="PF02650">
    <property type="entry name" value="HTH_WhiA"/>
    <property type="match status" value="1"/>
</dbReference>
<dbReference type="Pfam" id="PF14527">
    <property type="entry name" value="LAGLIDADG_WhiA"/>
    <property type="match status" value="1"/>
</dbReference>
<dbReference type="Pfam" id="PF10298">
    <property type="entry name" value="WhiA_N"/>
    <property type="match status" value="1"/>
</dbReference>
<dbReference type="SUPFAM" id="SSF55608">
    <property type="entry name" value="Homing endonucleases"/>
    <property type="match status" value="1"/>
</dbReference>
<gene>
    <name evidence="1" type="primary">whiA</name>
    <name type="ordered locus">LBA0693</name>
</gene>
<proteinExistence type="inferred from homology"/>
<reference key="1">
    <citation type="journal article" date="2005" name="Proc. Natl. Acad. Sci. U.S.A.">
        <title>Complete genome sequence of the probiotic lactic acid bacterium Lactobacillus acidophilus NCFM.</title>
        <authorList>
            <person name="Altermann E."/>
            <person name="Russell W.M."/>
            <person name="Azcarate-Peril M.A."/>
            <person name="Barrangou R."/>
            <person name="Buck B.L."/>
            <person name="McAuliffe O."/>
            <person name="Souther N."/>
            <person name="Dobson A."/>
            <person name="Duong T."/>
            <person name="Callanan M."/>
            <person name="Lick S."/>
            <person name="Hamrick A."/>
            <person name="Cano R."/>
            <person name="Klaenhammer T.R."/>
        </authorList>
    </citation>
    <scope>NUCLEOTIDE SEQUENCE [LARGE SCALE GENOMIC DNA]</scope>
    <source>
        <strain>ATCC 700396 / NCK56 / N2 / NCFM</strain>
    </source>
</reference>
<comment type="function">
    <text evidence="1">Involved in cell division and chromosome segregation.</text>
</comment>
<comment type="similarity">
    <text evidence="1">Belongs to the WhiA family.</text>
</comment>
<keyword id="KW-0131">Cell cycle</keyword>
<keyword id="KW-0132">Cell division</keyword>
<keyword id="KW-0238">DNA-binding</keyword>
<keyword id="KW-1185">Reference proteome</keyword>
<name>WHIA_LACAC</name>
<feature type="chain" id="PRO_0000376493" description="Probable cell division protein WhiA">
    <location>
        <begin position="1"/>
        <end position="311"/>
    </location>
</feature>
<feature type="DNA-binding region" description="H-T-H motif" evidence="1">
    <location>
        <begin position="277"/>
        <end position="311"/>
    </location>
</feature>
<evidence type="ECO:0000255" key="1">
    <source>
        <dbReference type="HAMAP-Rule" id="MF_01420"/>
    </source>
</evidence>
<accession>Q5FL56</accession>
<organism>
    <name type="scientific">Lactobacillus acidophilus (strain ATCC 700396 / NCK56 / N2 / NCFM)</name>
    <dbReference type="NCBI Taxonomy" id="272621"/>
    <lineage>
        <taxon>Bacteria</taxon>
        <taxon>Bacillati</taxon>
        <taxon>Bacillota</taxon>
        <taxon>Bacilli</taxon>
        <taxon>Lactobacillales</taxon>
        <taxon>Lactobacillaceae</taxon>
        <taxon>Lactobacillus</taxon>
    </lineage>
</organism>